<feature type="chain" id="PRO_1000131707" description="Putative double-stranded DNA mimic protein YciU">
    <location>
        <begin position="1"/>
        <end position="109"/>
    </location>
</feature>
<sequence>MDMDLNNRLTEDETLEQAYDIFLELAADNLDPADVLLFNLQFEERGGAELFDPAEDWQEHVDFDLNPDFFAEVVIGLADSEDGEINDVFARILLCREKDHKLCHIIWRE</sequence>
<dbReference type="EMBL" id="CP000970">
    <property type="protein sequence ID" value="ACB19824.1"/>
    <property type="molecule type" value="Genomic_DNA"/>
</dbReference>
<dbReference type="RefSeq" id="WP_000366959.1">
    <property type="nucleotide sequence ID" value="NC_010498.1"/>
</dbReference>
<dbReference type="SMR" id="B1LH52"/>
<dbReference type="KEGG" id="ecm:EcSMS35_1892"/>
<dbReference type="HOGENOM" id="CLU_143392_0_0_6"/>
<dbReference type="Proteomes" id="UP000007011">
    <property type="component" value="Chromosome"/>
</dbReference>
<dbReference type="Gene3D" id="3.10.450.140">
    <property type="entry name" value="dsDNA mimic, putative"/>
    <property type="match status" value="1"/>
</dbReference>
<dbReference type="HAMAP" id="MF_00680">
    <property type="entry name" value="Put_dsDNA_mimic"/>
    <property type="match status" value="1"/>
</dbReference>
<dbReference type="InterPro" id="IPR007376">
    <property type="entry name" value="dsDNA_mimic_put"/>
</dbReference>
<dbReference type="InterPro" id="IPR036763">
    <property type="entry name" value="Put_dsDNA_mimic_sf"/>
</dbReference>
<dbReference type="NCBIfam" id="NF003469">
    <property type="entry name" value="PRK05094.1"/>
    <property type="match status" value="1"/>
</dbReference>
<dbReference type="Pfam" id="PF04269">
    <property type="entry name" value="DUF440"/>
    <property type="match status" value="1"/>
</dbReference>
<dbReference type="PIRSF" id="PIRSF004916">
    <property type="entry name" value="UCP004916"/>
    <property type="match status" value="1"/>
</dbReference>
<dbReference type="SUPFAM" id="SSF102816">
    <property type="entry name" value="Putative dsDNA mimic"/>
    <property type="match status" value="1"/>
</dbReference>
<gene>
    <name evidence="1" type="primary">yciU</name>
    <name type="ordered locus">EcSMS35_1892</name>
</gene>
<reference key="1">
    <citation type="journal article" date="2008" name="J. Bacteriol.">
        <title>Insights into the environmental resistance gene pool from the genome sequence of the multidrug-resistant environmental isolate Escherichia coli SMS-3-5.</title>
        <authorList>
            <person name="Fricke W.F."/>
            <person name="Wright M.S."/>
            <person name="Lindell A.H."/>
            <person name="Harkins D.M."/>
            <person name="Baker-Austin C."/>
            <person name="Ravel J."/>
            <person name="Stepanauskas R."/>
        </authorList>
    </citation>
    <scope>NUCLEOTIDE SEQUENCE [LARGE SCALE GENOMIC DNA]</scope>
    <source>
        <strain>SMS-3-5 / SECEC</strain>
    </source>
</reference>
<accession>B1LH52</accession>
<organism>
    <name type="scientific">Escherichia coli (strain SMS-3-5 / SECEC)</name>
    <dbReference type="NCBI Taxonomy" id="439855"/>
    <lineage>
        <taxon>Bacteria</taxon>
        <taxon>Pseudomonadati</taxon>
        <taxon>Pseudomonadota</taxon>
        <taxon>Gammaproteobacteria</taxon>
        <taxon>Enterobacterales</taxon>
        <taxon>Enterobacteriaceae</taxon>
        <taxon>Escherichia</taxon>
    </lineage>
</organism>
<comment type="function">
    <text evidence="1">May act as a double-stranded DNA (dsDNA) mimic. Probably regulates the activity of a dsDNA-binding protein.</text>
</comment>
<comment type="similarity">
    <text evidence="1">Belongs to the putative dsDNA mimic protein family.</text>
</comment>
<protein>
    <recommendedName>
        <fullName evidence="1">Putative double-stranded DNA mimic protein YciU</fullName>
    </recommendedName>
</protein>
<evidence type="ECO:0000255" key="1">
    <source>
        <dbReference type="HAMAP-Rule" id="MF_00680"/>
    </source>
</evidence>
<name>YCIU_ECOSM</name>
<proteinExistence type="inferred from homology"/>